<accession>Q84QA7</accession>
<accession>A0A0P0VW20</accession>
<gene>
    <name evidence="5" type="primary">COI2</name>
    <name evidence="9" type="ordered locus">Os03g0265500</name>
    <name evidence="8" type="ordered locus">LOC_Os03g15880</name>
    <name evidence="7" type="ORF">OJ1012B02.14</name>
    <name evidence="10" type="ORF">OsJ_10247</name>
</gene>
<protein>
    <recommendedName>
        <fullName evidence="6">Coronatine-insensitive protein homolog 2</fullName>
        <shortName evidence="5">OsCOI2</shortName>
    </recommendedName>
</protein>
<proteinExistence type="evidence at protein level"/>
<sequence length="589" mass="66265">MGGEAGERRLGRAMSFGIPDVALGLVMGFVEDPWDRDAISLVCRHWCRVDALSRKHVTVAMAYSTTPDRLFRRFPCLESLKLKAKPRAAMFNLIPEDWGGSASPWIRQLSASFHFLKALHLRRMIVSDDDLDVLVRAKAHMLSSFKLDRCSGFSTSSLALVARTCKKLETLFLEDSIIAEKENDEWIRELATNNSVLETLNFFLTDLRASPAYLTLLVRNCRRLKVLKISECFMLDLVDLFRTAEILQDFAGGSFDDQGQVEESRNYENYYFPPSLLRLSLLYMGTKEMQVLFPYGAALKKLDLQFTFLSTEDHCQLVQRCPNLEILEVRDVIGDRGLEVVAQTCKKLQRLRVERGDDDQGGLEDEHGMVTQVGLMAVAQGCPHLEYWAVHVTDITNAALEAIGTYSSSLNDFRLVLLDREANITESPLDNGVRALLRGCTKLRRFAFYVRPGALSDVGLGYIGEFSKTIRYMLLGNVGESDQGLLQLSTGCPSLQKLELRGCFFSERALAVAVLQLKSLRYLWVQGYKASPNGTDLMAMVRPFWNIEIIAPNQDEVCPDGQAQILAYYSLAGMRSDYPHSVIPLYPSV</sequence>
<comment type="function">
    <text evidence="1 2">Involved in jasmonate (JA) signaling. Required for jasmonate signaling in plant defense responses (By similarity). Component of SCF(COI1) E3 ubiquitin ligase complexes, which may mediate the ubiquitination and subsequent proteasomal degradation of target proteins, including TIFY/JAZ family (By similarity).</text>
</comment>
<comment type="subunit">
    <text evidence="4">Interacts with TIFY9/JAZ5, TIFY11C/JAZ11 and TIFY11D/JAZ12 in a coronatine-dependent manner.</text>
</comment>
<comment type="tissue specificity">
    <text evidence="4">Expressed in roots, shoots, leaf sheaths and leaf blades.</text>
</comment>
<reference key="1">
    <citation type="journal article" date="2005" name="Genome Res.">
        <title>Sequence, annotation, and analysis of synteny between rice chromosome 3 and diverged grass species.</title>
        <authorList>
            <consortium name="The rice chromosome 3 sequencing consortium"/>
            <person name="Buell C.R."/>
            <person name="Yuan Q."/>
            <person name="Ouyang S."/>
            <person name="Liu J."/>
            <person name="Zhu W."/>
            <person name="Wang A."/>
            <person name="Maiti R."/>
            <person name="Haas B."/>
            <person name="Wortman J."/>
            <person name="Pertea M."/>
            <person name="Jones K.M."/>
            <person name="Kim M."/>
            <person name="Overton L."/>
            <person name="Tsitrin T."/>
            <person name="Fadrosh D."/>
            <person name="Bera J."/>
            <person name="Weaver B."/>
            <person name="Jin S."/>
            <person name="Johri S."/>
            <person name="Reardon M."/>
            <person name="Webb K."/>
            <person name="Hill J."/>
            <person name="Moffat K."/>
            <person name="Tallon L."/>
            <person name="Van Aken S."/>
            <person name="Lewis M."/>
            <person name="Utterback T."/>
            <person name="Feldblyum T."/>
            <person name="Zismann V."/>
            <person name="Iobst S."/>
            <person name="Hsiao J."/>
            <person name="de Vazeille A.R."/>
            <person name="Salzberg S.L."/>
            <person name="White O."/>
            <person name="Fraser C.M."/>
            <person name="Yu Y."/>
            <person name="Kim H."/>
            <person name="Rambo T."/>
            <person name="Currie J."/>
            <person name="Collura K."/>
            <person name="Kernodle-Thompson S."/>
            <person name="Wei F."/>
            <person name="Kudrna K."/>
            <person name="Ammiraju J.S.S."/>
            <person name="Luo M."/>
            <person name="Goicoechea J.L."/>
            <person name="Wing R.A."/>
            <person name="Henry D."/>
            <person name="Oates R."/>
            <person name="Palmer M."/>
            <person name="Pries G."/>
            <person name="Saski C."/>
            <person name="Simmons J."/>
            <person name="Soderlund C."/>
            <person name="Nelson W."/>
            <person name="de la Bastide M."/>
            <person name="Spiegel L."/>
            <person name="Nascimento L."/>
            <person name="Huang E."/>
            <person name="Preston R."/>
            <person name="Zutavern T."/>
            <person name="Palmer L."/>
            <person name="O'Shaughnessy A."/>
            <person name="Dike S."/>
            <person name="McCombie W.R."/>
            <person name="Minx P."/>
            <person name="Cordum H."/>
            <person name="Wilson R."/>
            <person name="Jin W."/>
            <person name="Lee H.R."/>
            <person name="Jiang J."/>
            <person name="Jackson S."/>
        </authorList>
    </citation>
    <scope>NUCLEOTIDE SEQUENCE [LARGE SCALE GENOMIC DNA]</scope>
    <source>
        <strain>cv. Nipponbare</strain>
    </source>
</reference>
<reference key="2">
    <citation type="journal article" date="2005" name="Nature">
        <title>The map-based sequence of the rice genome.</title>
        <authorList>
            <consortium name="International rice genome sequencing project (IRGSP)"/>
        </authorList>
    </citation>
    <scope>NUCLEOTIDE SEQUENCE [LARGE SCALE GENOMIC DNA]</scope>
    <source>
        <strain>cv. Nipponbare</strain>
    </source>
</reference>
<reference key="3">
    <citation type="journal article" date="2008" name="Nucleic Acids Res.">
        <title>The rice annotation project database (RAP-DB): 2008 update.</title>
        <authorList>
            <consortium name="The rice annotation project (RAP)"/>
        </authorList>
    </citation>
    <scope>GENOME REANNOTATION</scope>
    <source>
        <strain>cv. Nipponbare</strain>
    </source>
</reference>
<reference key="4">
    <citation type="journal article" date="2013" name="Rice">
        <title>Improvement of the Oryza sativa Nipponbare reference genome using next generation sequence and optical map data.</title>
        <authorList>
            <person name="Kawahara Y."/>
            <person name="de la Bastide M."/>
            <person name="Hamilton J.P."/>
            <person name="Kanamori H."/>
            <person name="McCombie W.R."/>
            <person name="Ouyang S."/>
            <person name="Schwartz D.C."/>
            <person name="Tanaka T."/>
            <person name="Wu J."/>
            <person name="Zhou S."/>
            <person name="Childs K.L."/>
            <person name="Davidson R.M."/>
            <person name="Lin H."/>
            <person name="Quesada-Ocampo L."/>
            <person name="Vaillancourt B."/>
            <person name="Sakai H."/>
            <person name="Lee S.S."/>
            <person name="Kim J."/>
            <person name="Numa H."/>
            <person name="Itoh T."/>
            <person name="Buell C.R."/>
            <person name="Matsumoto T."/>
        </authorList>
    </citation>
    <scope>GENOME REANNOTATION</scope>
    <source>
        <strain>cv. Nipponbare</strain>
    </source>
</reference>
<reference key="5">
    <citation type="journal article" date="2005" name="PLoS Biol.">
        <title>The genomes of Oryza sativa: a history of duplications.</title>
        <authorList>
            <person name="Yu J."/>
            <person name="Wang J."/>
            <person name="Lin W."/>
            <person name="Li S."/>
            <person name="Li H."/>
            <person name="Zhou J."/>
            <person name="Ni P."/>
            <person name="Dong W."/>
            <person name="Hu S."/>
            <person name="Zeng C."/>
            <person name="Zhang J."/>
            <person name="Zhang Y."/>
            <person name="Li R."/>
            <person name="Xu Z."/>
            <person name="Li S."/>
            <person name="Li X."/>
            <person name="Zheng H."/>
            <person name="Cong L."/>
            <person name="Lin L."/>
            <person name="Yin J."/>
            <person name="Geng J."/>
            <person name="Li G."/>
            <person name="Shi J."/>
            <person name="Liu J."/>
            <person name="Lv H."/>
            <person name="Li J."/>
            <person name="Wang J."/>
            <person name="Deng Y."/>
            <person name="Ran L."/>
            <person name="Shi X."/>
            <person name="Wang X."/>
            <person name="Wu Q."/>
            <person name="Li C."/>
            <person name="Ren X."/>
            <person name="Wang J."/>
            <person name="Wang X."/>
            <person name="Li D."/>
            <person name="Liu D."/>
            <person name="Zhang X."/>
            <person name="Ji Z."/>
            <person name="Zhao W."/>
            <person name="Sun Y."/>
            <person name="Zhang Z."/>
            <person name="Bao J."/>
            <person name="Han Y."/>
            <person name="Dong L."/>
            <person name="Ji J."/>
            <person name="Chen P."/>
            <person name="Wu S."/>
            <person name="Liu J."/>
            <person name="Xiao Y."/>
            <person name="Bu D."/>
            <person name="Tan J."/>
            <person name="Yang L."/>
            <person name="Ye C."/>
            <person name="Zhang J."/>
            <person name="Xu J."/>
            <person name="Zhou Y."/>
            <person name="Yu Y."/>
            <person name="Zhang B."/>
            <person name="Zhuang S."/>
            <person name="Wei H."/>
            <person name="Liu B."/>
            <person name="Lei M."/>
            <person name="Yu H."/>
            <person name="Li Y."/>
            <person name="Xu H."/>
            <person name="Wei S."/>
            <person name="He X."/>
            <person name="Fang L."/>
            <person name="Zhang Z."/>
            <person name="Zhang Y."/>
            <person name="Huang X."/>
            <person name="Su Z."/>
            <person name="Tong W."/>
            <person name="Li J."/>
            <person name="Tong Z."/>
            <person name="Li S."/>
            <person name="Ye J."/>
            <person name="Wang L."/>
            <person name="Fang L."/>
            <person name="Lei T."/>
            <person name="Chen C.-S."/>
            <person name="Chen H.-C."/>
            <person name="Xu Z."/>
            <person name="Li H."/>
            <person name="Huang H."/>
            <person name="Zhang F."/>
            <person name="Xu H."/>
            <person name="Li N."/>
            <person name="Zhao C."/>
            <person name="Li S."/>
            <person name="Dong L."/>
            <person name="Huang Y."/>
            <person name="Li L."/>
            <person name="Xi Y."/>
            <person name="Qi Q."/>
            <person name="Li W."/>
            <person name="Zhang B."/>
            <person name="Hu W."/>
            <person name="Zhang Y."/>
            <person name="Tian X."/>
            <person name="Jiao Y."/>
            <person name="Liang X."/>
            <person name="Jin J."/>
            <person name="Gao L."/>
            <person name="Zheng W."/>
            <person name="Hao B."/>
            <person name="Liu S.-M."/>
            <person name="Wang W."/>
            <person name="Yuan L."/>
            <person name="Cao M."/>
            <person name="McDermott J."/>
            <person name="Samudrala R."/>
            <person name="Wang J."/>
            <person name="Wong G.K.-S."/>
            <person name="Yang H."/>
        </authorList>
    </citation>
    <scope>NUCLEOTIDE SEQUENCE [LARGE SCALE GENOMIC DNA]</scope>
    <source>
        <strain>cv. Nipponbare</strain>
    </source>
</reference>
<reference key="6">
    <citation type="journal article" date="2003" name="Science">
        <title>Collection, mapping, and annotation of over 28,000 cDNA clones from japonica rice.</title>
        <authorList>
            <consortium name="The rice full-length cDNA consortium"/>
        </authorList>
    </citation>
    <scope>NUCLEOTIDE SEQUENCE [LARGE SCALE MRNA]</scope>
    <source>
        <strain>cv. Nipponbare</strain>
    </source>
</reference>
<reference key="7">
    <citation type="journal article" date="2013" name="PLoS ONE">
        <title>Oryza sativa COI homologues restore jasmonate signal transduction in Arabidopsis coi1-1 mutants.</title>
        <authorList>
            <person name="Lee H.Y."/>
            <person name="Seo J.S."/>
            <person name="Cho J.H."/>
            <person name="Jung H."/>
            <person name="Kim J.K."/>
            <person name="Lee J.S."/>
            <person name="Rhee S."/>
            <person name="Do Choi Y."/>
        </authorList>
    </citation>
    <scope>INTERACTION WITH TIFY9/JAZ5; TIFY11C/JAZ11 AND TIFY11D/JAZ12</scope>
    <scope>TISSUE SPECIFICITY</scope>
</reference>
<evidence type="ECO:0000250" key="1">
    <source>
        <dbReference type="UniProtKB" id="O04197"/>
    </source>
</evidence>
<evidence type="ECO:0000250" key="2">
    <source>
        <dbReference type="UniProtKB" id="Q60EH4"/>
    </source>
</evidence>
<evidence type="ECO:0000255" key="3"/>
<evidence type="ECO:0000269" key="4">
    <source>
    </source>
</evidence>
<evidence type="ECO:0000303" key="5">
    <source>
    </source>
</evidence>
<evidence type="ECO:0000305" key="6"/>
<evidence type="ECO:0000312" key="7">
    <source>
        <dbReference type="EMBL" id="AAP06838.1"/>
    </source>
</evidence>
<evidence type="ECO:0000312" key="8">
    <source>
        <dbReference type="EMBL" id="ABF95134.1"/>
    </source>
</evidence>
<evidence type="ECO:0000312" key="9">
    <source>
        <dbReference type="EMBL" id="BAF11563.1"/>
    </source>
</evidence>
<evidence type="ECO:0000312" key="10">
    <source>
        <dbReference type="EMBL" id="EAZ26365.1"/>
    </source>
</evidence>
<evidence type="ECO:0000312" key="11">
    <source>
        <dbReference type="Proteomes" id="UP000059680"/>
    </source>
</evidence>
<keyword id="KW-1184">Jasmonic acid signaling pathway</keyword>
<keyword id="KW-0611">Plant defense</keyword>
<keyword id="KW-1185">Reference proteome</keyword>
<keyword id="KW-0833">Ubl conjugation pathway</keyword>
<dbReference type="EMBL" id="AC135205">
    <property type="protein sequence ID" value="AAP06838.1"/>
    <property type="molecule type" value="Genomic_DNA"/>
</dbReference>
<dbReference type="EMBL" id="DP000009">
    <property type="protein sequence ID" value="ABF95134.1"/>
    <property type="molecule type" value="Genomic_DNA"/>
</dbReference>
<dbReference type="EMBL" id="AP008209">
    <property type="protein sequence ID" value="BAF11563.1"/>
    <property type="molecule type" value="Genomic_DNA"/>
</dbReference>
<dbReference type="EMBL" id="AP014959">
    <property type="protein sequence ID" value="BAS83403.1"/>
    <property type="molecule type" value="Genomic_DNA"/>
</dbReference>
<dbReference type="EMBL" id="CM000140">
    <property type="protein sequence ID" value="EAZ26365.1"/>
    <property type="molecule type" value="Genomic_DNA"/>
</dbReference>
<dbReference type="EMBL" id="AK066392">
    <property type="protein sequence ID" value="BAG89947.1"/>
    <property type="molecule type" value="mRNA"/>
</dbReference>
<dbReference type="EMBL" id="AK100694">
    <property type="protein sequence ID" value="BAG94723.1"/>
    <property type="molecule type" value="mRNA"/>
</dbReference>
<dbReference type="RefSeq" id="XP_015632448.1">
    <property type="nucleotide sequence ID" value="XM_015776962.1"/>
</dbReference>
<dbReference type="RefSeq" id="XP_015632449.1">
    <property type="nucleotide sequence ID" value="XM_015776963.1"/>
</dbReference>
<dbReference type="RefSeq" id="XP_015632450.1">
    <property type="nucleotide sequence ID" value="XM_015776964.1"/>
</dbReference>
<dbReference type="RefSeq" id="XP_015632451.1">
    <property type="nucleotide sequence ID" value="XM_015776965.1"/>
</dbReference>
<dbReference type="SMR" id="Q84QA7"/>
<dbReference type="FunCoup" id="Q84QA7">
    <property type="interactions" value="280"/>
</dbReference>
<dbReference type="STRING" id="39947.Q84QA7"/>
<dbReference type="PaxDb" id="39947-Q84QA7"/>
<dbReference type="EnsemblPlants" id="Os03t0265500-01">
    <property type="protein sequence ID" value="Os03t0265500-01"/>
    <property type="gene ID" value="Os03g0265500"/>
</dbReference>
<dbReference type="EnsemblPlants" id="Os03t0265500-02">
    <property type="protein sequence ID" value="Os03t0265500-02"/>
    <property type="gene ID" value="Os03g0265500"/>
</dbReference>
<dbReference type="Gramene" id="Os03t0265500-01">
    <property type="protein sequence ID" value="Os03t0265500-01"/>
    <property type="gene ID" value="Os03g0265500"/>
</dbReference>
<dbReference type="Gramene" id="Os03t0265500-02">
    <property type="protein sequence ID" value="Os03t0265500-02"/>
    <property type="gene ID" value="Os03g0265500"/>
</dbReference>
<dbReference type="KEGG" id="dosa:Os03g0265500"/>
<dbReference type="eggNOG" id="KOG1947">
    <property type="taxonomic scope" value="Eukaryota"/>
</dbReference>
<dbReference type="HOGENOM" id="CLU_022456_1_0_1"/>
<dbReference type="InParanoid" id="Q84QA7"/>
<dbReference type="OMA" id="WIDQISH"/>
<dbReference type="OrthoDB" id="550575at2759"/>
<dbReference type="PlantReactome" id="R-OSA-6787011">
    <property type="pathway name" value="Jasmonic acid signaling"/>
</dbReference>
<dbReference type="Proteomes" id="UP000000763">
    <property type="component" value="Chromosome 3"/>
</dbReference>
<dbReference type="Proteomes" id="UP000007752">
    <property type="component" value="Chromosome 3"/>
</dbReference>
<dbReference type="Proteomes" id="UP000059680">
    <property type="component" value="Chromosome 3"/>
</dbReference>
<dbReference type="GO" id="GO:0019005">
    <property type="term" value="C:SCF ubiquitin ligase complex"/>
    <property type="evidence" value="ECO:0000318"/>
    <property type="project" value="GO_Central"/>
</dbReference>
<dbReference type="GO" id="GO:0006952">
    <property type="term" value="P:defense response"/>
    <property type="evidence" value="ECO:0007669"/>
    <property type="project" value="UniProtKB-KW"/>
</dbReference>
<dbReference type="GO" id="GO:0031146">
    <property type="term" value="P:SCF-dependent proteasomal ubiquitin-dependent protein catabolic process"/>
    <property type="evidence" value="ECO:0000318"/>
    <property type="project" value="GO_Central"/>
</dbReference>
<dbReference type="CDD" id="cd22159">
    <property type="entry name" value="F-box_AtTIR1-like"/>
    <property type="match status" value="1"/>
</dbReference>
<dbReference type="FunFam" id="3.80.10.10:FF:000124">
    <property type="entry name" value="Coronatine-insensitive protein 1"/>
    <property type="match status" value="1"/>
</dbReference>
<dbReference type="FunFam" id="1.20.1280.50:FF:000034">
    <property type="entry name" value="Coronatine-insensitive protein homolog 2"/>
    <property type="match status" value="1"/>
</dbReference>
<dbReference type="Gene3D" id="1.20.1280.50">
    <property type="match status" value="1"/>
</dbReference>
<dbReference type="Gene3D" id="3.80.10.10">
    <property type="entry name" value="Ribonuclease Inhibitor"/>
    <property type="match status" value="1"/>
</dbReference>
<dbReference type="InterPro" id="IPR041567">
    <property type="entry name" value="COI1_F-box"/>
</dbReference>
<dbReference type="InterPro" id="IPR032675">
    <property type="entry name" value="LRR_dom_sf"/>
</dbReference>
<dbReference type="InterPro" id="IPR041101">
    <property type="entry name" value="Transp_inhibit"/>
</dbReference>
<dbReference type="PANTHER" id="PTHR16134:SF119">
    <property type="entry name" value="AT02038P-RELATED"/>
    <property type="match status" value="1"/>
</dbReference>
<dbReference type="PANTHER" id="PTHR16134">
    <property type="entry name" value="F-BOX/TPR REPEAT PROTEIN POF3"/>
    <property type="match status" value="1"/>
</dbReference>
<dbReference type="Pfam" id="PF18511">
    <property type="entry name" value="F-box_5"/>
    <property type="match status" value="1"/>
</dbReference>
<dbReference type="Pfam" id="PF18791">
    <property type="entry name" value="Transp_inhibit"/>
    <property type="match status" value="1"/>
</dbReference>
<dbReference type="SUPFAM" id="SSF52047">
    <property type="entry name" value="RNI-like"/>
    <property type="match status" value="2"/>
</dbReference>
<organism evidence="11">
    <name type="scientific">Oryza sativa subsp. japonica</name>
    <name type="common">Rice</name>
    <dbReference type="NCBI Taxonomy" id="39947"/>
    <lineage>
        <taxon>Eukaryota</taxon>
        <taxon>Viridiplantae</taxon>
        <taxon>Streptophyta</taxon>
        <taxon>Embryophyta</taxon>
        <taxon>Tracheophyta</taxon>
        <taxon>Spermatophyta</taxon>
        <taxon>Magnoliopsida</taxon>
        <taxon>Liliopsida</taxon>
        <taxon>Poales</taxon>
        <taxon>Poaceae</taxon>
        <taxon>BOP clade</taxon>
        <taxon>Oryzoideae</taxon>
        <taxon>Oryzeae</taxon>
        <taxon>Oryzinae</taxon>
        <taxon>Oryza</taxon>
        <taxon>Oryza sativa</taxon>
    </lineage>
</organism>
<name>COI2_ORYSJ</name>
<feature type="chain" id="PRO_0000434869" description="Coronatine-insensitive protein homolog 2">
    <location>
        <begin position="1"/>
        <end position="589"/>
    </location>
</feature>
<feature type="domain" description="F-box" evidence="3">
    <location>
        <begin position="18"/>
        <end position="59"/>
    </location>
</feature>
<feature type="binding site" evidence="1">
    <location>
        <position position="87"/>
    </location>
    <ligand>
        <name>jasmonate</name>
        <dbReference type="ChEBI" id="CHEBI:58431"/>
    </ligand>
</feature>
<feature type="binding site" evidence="1">
    <location>
        <position position="352"/>
    </location>
    <ligand>
        <name>jasmonate</name>
        <dbReference type="ChEBI" id="CHEBI:58431"/>
    </ligand>
</feature>
<feature type="binding site" evidence="1">
    <location>
        <position position="414"/>
    </location>
    <ligand>
        <name>jasmonate</name>
        <dbReference type="ChEBI" id="CHEBI:58431"/>
    </ligand>
</feature>
<feature type="binding site" evidence="1">
    <location>
        <position position="501"/>
    </location>
    <ligand>
        <name>jasmonate</name>
        <dbReference type="ChEBI" id="CHEBI:58431"/>
    </ligand>
</feature>